<gene>
    <name type="primary">ALDH3A2</name>
    <name type="ORF">QccE-15682</name>
</gene>
<keyword id="KW-0256">Endoplasmic reticulum</keyword>
<keyword id="KW-0276">Fatty acid metabolism</keyword>
<keyword id="KW-0443">Lipid metabolism</keyword>
<keyword id="KW-0472">Membrane</keyword>
<keyword id="KW-0492">Microsome</keyword>
<keyword id="KW-0520">NAD</keyword>
<keyword id="KW-0560">Oxidoreductase</keyword>
<keyword id="KW-0597">Phosphoprotein</keyword>
<keyword id="KW-1185">Reference proteome</keyword>
<keyword id="KW-0812">Transmembrane</keyword>
<keyword id="KW-1133">Transmembrane helix</keyword>
<proteinExistence type="evidence at transcript level"/>
<feature type="chain" id="PRO_0000056474" description="Aldehyde dehydrogenase family 3 member A2">
    <location>
        <begin position="1"/>
        <end position="485"/>
    </location>
</feature>
<feature type="topological domain" description="Cytoplasmic">
    <location>
        <begin position="1"/>
        <end position="463"/>
    </location>
</feature>
<feature type="transmembrane region" description="Helical" evidence="4">
    <location>
        <begin position="464"/>
        <end position="484"/>
    </location>
</feature>
<feature type="short sequence motif" description="Prevents secretion from ER" evidence="1">
    <location>
        <begin position="481"/>
        <end position="484"/>
    </location>
</feature>
<feature type="active site" evidence="5">
    <location>
        <position position="207"/>
    </location>
</feature>
<feature type="active site" evidence="6">
    <location>
        <position position="241"/>
    </location>
</feature>
<feature type="binding site" evidence="4">
    <location>
        <begin position="185"/>
        <end position="190"/>
    </location>
    <ligand>
        <name>NAD(+)</name>
        <dbReference type="ChEBI" id="CHEBI:57540"/>
    </ligand>
</feature>
<feature type="modified residue" description="Phosphoserine" evidence="3">
    <location>
        <position position="293"/>
    </location>
</feature>
<accession>Q60HH8</accession>
<organism>
    <name type="scientific">Macaca fascicularis</name>
    <name type="common">Crab-eating macaque</name>
    <name type="synonym">Cynomolgus monkey</name>
    <dbReference type="NCBI Taxonomy" id="9541"/>
    <lineage>
        <taxon>Eukaryota</taxon>
        <taxon>Metazoa</taxon>
        <taxon>Chordata</taxon>
        <taxon>Craniata</taxon>
        <taxon>Vertebrata</taxon>
        <taxon>Euteleostomi</taxon>
        <taxon>Mammalia</taxon>
        <taxon>Eutheria</taxon>
        <taxon>Euarchontoglires</taxon>
        <taxon>Primates</taxon>
        <taxon>Haplorrhini</taxon>
        <taxon>Catarrhini</taxon>
        <taxon>Cercopithecidae</taxon>
        <taxon>Cercopithecinae</taxon>
        <taxon>Macaca</taxon>
    </lineage>
</organism>
<evidence type="ECO:0000250" key="1"/>
<evidence type="ECO:0000250" key="2">
    <source>
        <dbReference type="UniProtKB" id="P30839"/>
    </source>
</evidence>
<evidence type="ECO:0000250" key="3">
    <source>
        <dbReference type="UniProtKB" id="P51648"/>
    </source>
</evidence>
<evidence type="ECO:0000255" key="4"/>
<evidence type="ECO:0000255" key="5">
    <source>
        <dbReference type="PROSITE-ProRule" id="PRU10007"/>
    </source>
</evidence>
<evidence type="ECO:0000255" key="6">
    <source>
        <dbReference type="PROSITE-ProRule" id="PRU10008"/>
    </source>
</evidence>
<evidence type="ECO:0000305" key="7"/>
<name>AL3A2_MACFA</name>
<dbReference type="EC" id="1.2.1.3" evidence="3"/>
<dbReference type="EC" id="1.2.1.94" evidence="3"/>
<dbReference type="EMBL" id="AB125149">
    <property type="protein sequence ID" value="BAD51937.1"/>
    <property type="molecule type" value="mRNA"/>
</dbReference>
<dbReference type="RefSeq" id="NP_001270311.1">
    <property type="nucleotide sequence ID" value="NM_001283382.1"/>
</dbReference>
<dbReference type="SMR" id="Q60HH8"/>
<dbReference type="STRING" id="9541.ENSMFAP00000017937"/>
<dbReference type="eggNOG" id="KOG2456">
    <property type="taxonomic scope" value="Eukaryota"/>
</dbReference>
<dbReference type="Proteomes" id="UP000233100">
    <property type="component" value="Unplaced"/>
</dbReference>
<dbReference type="GO" id="GO:0005789">
    <property type="term" value="C:endoplasmic reticulum membrane"/>
    <property type="evidence" value="ECO:0007669"/>
    <property type="project" value="UniProtKB-SubCell"/>
</dbReference>
<dbReference type="GO" id="GO:0004028">
    <property type="term" value="F:3-chloroallyl aldehyde dehydrogenase activity"/>
    <property type="evidence" value="ECO:0007669"/>
    <property type="project" value="TreeGrafter"/>
</dbReference>
<dbReference type="GO" id="GO:0050061">
    <property type="term" value="F:long-chain fatty aldehyde dehydrogenase (NAD+) activity"/>
    <property type="evidence" value="ECO:0000250"/>
    <property type="project" value="UniProtKB"/>
</dbReference>
<dbReference type="GO" id="GO:0052814">
    <property type="term" value="F:medium-chain fatty aldehyde dehydrogenase (NAD+) activity"/>
    <property type="evidence" value="ECO:0000250"/>
    <property type="project" value="UniProtKB"/>
</dbReference>
<dbReference type="GO" id="GO:0006631">
    <property type="term" value="P:fatty acid metabolic process"/>
    <property type="evidence" value="ECO:0007669"/>
    <property type="project" value="UniProtKB-KW"/>
</dbReference>
<dbReference type="GO" id="GO:0046458">
    <property type="term" value="P:hexadecanal metabolic process"/>
    <property type="evidence" value="ECO:0000250"/>
    <property type="project" value="UniProtKB"/>
</dbReference>
<dbReference type="CDD" id="cd07132">
    <property type="entry name" value="ALDH_F3AB"/>
    <property type="match status" value="1"/>
</dbReference>
<dbReference type="FunFam" id="3.40.309.10:FF:000003">
    <property type="entry name" value="Aldehyde dehydrogenase"/>
    <property type="match status" value="1"/>
</dbReference>
<dbReference type="FunFam" id="3.40.605.10:FF:000004">
    <property type="entry name" value="Aldehyde dehydrogenase"/>
    <property type="match status" value="1"/>
</dbReference>
<dbReference type="Gene3D" id="3.40.605.10">
    <property type="entry name" value="Aldehyde Dehydrogenase, Chain A, domain 1"/>
    <property type="match status" value="1"/>
</dbReference>
<dbReference type="Gene3D" id="3.40.309.10">
    <property type="entry name" value="Aldehyde Dehydrogenase, Chain A, domain 2"/>
    <property type="match status" value="1"/>
</dbReference>
<dbReference type="InterPro" id="IPR016161">
    <property type="entry name" value="Ald_DH/histidinol_DH"/>
</dbReference>
<dbReference type="InterPro" id="IPR016163">
    <property type="entry name" value="Ald_DH_C"/>
</dbReference>
<dbReference type="InterPro" id="IPR016160">
    <property type="entry name" value="Ald_DH_CS_CYS"/>
</dbReference>
<dbReference type="InterPro" id="IPR029510">
    <property type="entry name" value="Ald_DH_CS_GLU"/>
</dbReference>
<dbReference type="InterPro" id="IPR016162">
    <property type="entry name" value="Ald_DH_N"/>
</dbReference>
<dbReference type="InterPro" id="IPR015590">
    <property type="entry name" value="Aldehyde_DH_dom"/>
</dbReference>
<dbReference type="InterPro" id="IPR012394">
    <property type="entry name" value="Aldehyde_DH_NAD(P)"/>
</dbReference>
<dbReference type="PANTHER" id="PTHR43570">
    <property type="entry name" value="ALDEHYDE DEHYDROGENASE"/>
    <property type="match status" value="1"/>
</dbReference>
<dbReference type="PANTHER" id="PTHR43570:SF9">
    <property type="entry name" value="ALDEHYDE DEHYDROGENASE FAMILY 3 MEMBER A2"/>
    <property type="match status" value="1"/>
</dbReference>
<dbReference type="Pfam" id="PF00171">
    <property type="entry name" value="Aldedh"/>
    <property type="match status" value="1"/>
</dbReference>
<dbReference type="PIRSF" id="PIRSF036492">
    <property type="entry name" value="ALDH"/>
    <property type="match status" value="1"/>
</dbReference>
<dbReference type="SUPFAM" id="SSF53720">
    <property type="entry name" value="ALDH-like"/>
    <property type="match status" value="1"/>
</dbReference>
<dbReference type="PROSITE" id="PS00070">
    <property type="entry name" value="ALDEHYDE_DEHYDR_CYS"/>
    <property type="match status" value="1"/>
</dbReference>
<dbReference type="PROSITE" id="PS00687">
    <property type="entry name" value="ALDEHYDE_DEHYDR_GLU"/>
    <property type="match status" value="1"/>
</dbReference>
<comment type="function">
    <text evidence="3">Catalyzes the oxidation of medium and long-chain aliphatic aldehydes to fatty acids. Active on a variety of saturated and unsaturated aliphatic aldehydes between 6 and 24 carbons in length. Responsible for conversion of the sphingosine 1-phosphate (S1P) degradation product hexadecenal to hexadecenoic acid.</text>
</comment>
<comment type="catalytic activity">
    <reaction evidence="3">
        <text>an aldehyde + NAD(+) + H2O = a carboxylate + NADH + 2 H(+)</text>
        <dbReference type="Rhea" id="RHEA:16185"/>
        <dbReference type="ChEBI" id="CHEBI:15377"/>
        <dbReference type="ChEBI" id="CHEBI:15378"/>
        <dbReference type="ChEBI" id="CHEBI:17478"/>
        <dbReference type="ChEBI" id="CHEBI:29067"/>
        <dbReference type="ChEBI" id="CHEBI:57540"/>
        <dbReference type="ChEBI" id="CHEBI:57945"/>
        <dbReference type="EC" id="1.2.1.3"/>
    </reaction>
</comment>
<comment type="catalytic activity">
    <reaction evidence="3">
        <text>a fatty aldehyde + NAD(+) + H2O = a fatty acid + NADH + 2 H(+)</text>
        <dbReference type="Rhea" id="RHEA:49832"/>
        <dbReference type="ChEBI" id="CHEBI:15377"/>
        <dbReference type="ChEBI" id="CHEBI:15378"/>
        <dbReference type="ChEBI" id="CHEBI:28868"/>
        <dbReference type="ChEBI" id="CHEBI:35746"/>
        <dbReference type="ChEBI" id="CHEBI:57540"/>
        <dbReference type="ChEBI" id="CHEBI:57945"/>
    </reaction>
</comment>
<comment type="catalytic activity">
    <reaction evidence="3">
        <text>(2E)-hexadecenal + NAD(+) + H2O = (E)-hexadec-2-enoate + NADH + 2 H(+)</text>
        <dbReference type="Rhea" id="RHEA:36135"/>
        <dbReference type="ChEBI" id="CHEBI:15377"/>
        <dbReference type="ChEBI" id="CHEBI:15378"/>
        <dbReference type="ChEBI" id="CHEBI:17585"/>
        <dbReference type="ChEBI" id="CHEBI:57540"/>
        <dbReference type="ChEBI" id="CHEBI:57945"/>
        <dbReference type="ChEBI" id="CHEBI:72745"/>
    </reaction>
</comment>
<comment type="catalytic activity">
    <reaction evidence="3">
        <text>hexadecanoate + NADH + 2 H(+) = hexadecanal + NAD(+) + H2O</text>
        <dbReference type="Rhea" id="RHEA:33739"/>
        <dbReference type="ChEBI" id="CHEBI:7896"/>
        <dbReference type="ChEBI" id="CHEBI:15377"/>
        <dbReference type="ChEBI" id="CHEBI:15378"/>
        <dbReference type="ChEBI" id="CHEBI:17600"/>
        <dbReference type="ChEBI" id="CHEBI:57540"/>
        <dbReference type="ChEBI" id="CHEBI:57945"/>
    </reaction>
</comment>
<comment type="catalytic activity">
    <reaction evidence="3">
        <text>22-oxodocosanoate + NAD(+) + H2O = docosanedioate + NADH + 2 H(+)</text>
        <dbReference type="Rhea" id="RHEA:39015"/>
        <dbReference type="ChEBI" id="CHEBI:15377"/>
        <dbReference type="ChEBI" id="CHEBI:15378"/>
        <dbReference type="ChEBI" id="CHEBI:57540"/>
        <dbReference type="ChEBI" id="CHEBI:57945"/>
        <dbReference type="ChEBI" id="CHEBI:76298"/>
        <dbReference type="ChEBI" id="CHEBI:76299"/>
    </reaction>
</comment>
<comment type="catalytic activity">
    <reaction evidence="3">
        <text>2,6,10,14-tetramethylpentadecanal + NAD(+) + H2O = 2,6,10,14-tetramethylpentadecanoate + NADH + 2 H(+)</text>
        <dbReference type="Rhea" id="RHEA:44016"/>
        <dbReference type="ChEBI" id="CHEBI:15377"/>
        <dbReference type="ChEBI" id="CHEBI:15378"/>
        <dbReference type="ChEBI" id="CHEBI:49189"/>
        <dbReference type="ChEBI" id="CHEBI:57540"/>
        <dbReference type="ChEBI" id="CHEBI:57945"/>
        <dbReference type="ChEBI" id="CHEBI:77268"/>
    </reaction>
</comment>
<comment type="catalytic activity">
    <reaction evidence="3">
        <text>octadecanal + NAD(+) + H2O = octadecanoate + NADH + 2 H(+)</text>
        <dbReference type="Rhea" id="RHEA:44020"/>
        <dbReference type="ChEBI" id="CHEBI:15377"/>
        <dbReference type="ChEBI" id="CHEBI:15378"/>
        <dbReference type="ChEBI" id="CHEBI:17034"/>
        <dbReference type="ChEBI" id="CHEBI:25629"/>
        <dbReference type="ChEBI" id="CHEBI:57540"/>
        <dbReference type="ChEBI" id="CHEBI:57945"/>
    </reaction>
</comment>
<comment type="catalytic activity">
    <reaction evidence="3">
        <text>dodecanoate + NADH + 2 H(+) = dodecanal + NAD(+) + H2O</text>
        <dbReference type="Rhea" id="RHEA:44168"/>
        <dbReference type="ChEBI" id="CHEBI:15377"/>
        <dbReference type="ChEBI" id="CHEBI:15378"/>
        <dbReference type="ChEBI" id="CHEBI:18262"/>
        <dbReference type="ChEBI" id="CHEBI:27836"/>
        <dbReference type="ChEBI" id="CHEBI:57540"/>
        <dbReference type="ChEBI" id="CHEBI:57945"/>
    </reaction>
</comment>
<comment type="catalytic activity">
    <reaction evidence="3">
        <text>decanal + NAD(+) + H2O = decanoate + NADH + 2 H(+)</text>
        <dbReference type="Rhea" id="RHEA:44104"/>
        <dbReference type="ChEBI" id="CHEBI:15377"/>
        <dbReference type="ChEBI" id="CHEBI:15378"/>
        <dbReference type="ChEBI" id="CHEBI:27689"/>
        <dbReference type="ChEBI" id="CHEBI:31457"/>
        <dbReference type="ChEBI" id="CHEBI:57540"/>
        <dbReference type="ChEBI" id="CHEBI:57945"/>
    </reaction>
</comment>
<comment type="catalytic activity">
    <reaction evidence="3">
        <text>tetradecanal + NAD(+) + H2O = tetradecanoate + NADH + 2 H(+)</text>
        <dbReference type="Rhea" id="RHEA:44172"/>
        <dbReference type="ChEBI" id="CHEBI:15377"/>
        <dbReference type="ChEBI" id="CHEBI:15378"/>
        <dbReference type="ChEBI" id="CHEBI:30807"/>
        <dbReference type="ChEBI" id="CHEBI:57540"/>
        <dbReference type="ChEBI" id="CHEBI:57945"/>
        <dbReference type="ChEBI" id="CHEBI:84067"/>
    </reaction>
</comment>
<comment type="catalytic activity">
    <reaction evidence="3">
        <text>octanal + NAD(+) + H2O = octanoate + NADH + 2 H(+)</text>
        <dbReference type="Rhea" id="RHEA:44100"/>
        <dbReference type="ChEBI" id="CHEBI:15377"/>
        <dbReference type="ChEBI" id="CHEBI:15378"/>
        <dbReference type="ChEBI" id="CHEBI:17935"/>
        <dbReference type="ChEBI" id="CHEBI:25646"/>
        <dbReference type="ChEBI" id="CHEBI:57540"/>
        <dbReference type="ChEBI" id="CHEBI:57945"/>
    </reaction>
</comment>
<comment type="catalytic activity">
    <reaction evidence="3">
        <text>heptanal + NAD(+) + H2O = heptanoate + NADH + 2 H(+)</text>
        <dbReference type="Rhea" id="RHEA:44108"/>
        <dbReference type="ChEBI" id="CHEBI:15377"/>
        <dbReference type="ChEBI" id="CHEBI:15378"/>
        <dbReference type="ChEBI" id="CHEBI:32362"/>
        <dbReference type="ChEBI" id="CHEBI:34787"/>
        <dbReference type="ChEBI" id="CHEBI:57540"/>
        <dbReference type="ChEBI" id="CHEBI:57945"/>
    </reaction>
</comment>
<comment type="catalytic activity">
    <reaction evidence="3">
        <text>(2E,6E)-farnesal + NAD(+) + H2O = (2E,6E)-farnesoate + NADH + 2 H(+)</text>
        <dbReference type="Rhea" id="RHEA:24216"/>
        <dbReference type="ChEBI" id="CHEBI:15377"/>
        <dbReference type="ChEBI" id="CHEBI:15378"/>
        <dbReference type="ChEBI" id="CHEBI:15894"/>
        <dbReference type="ChEBI" id="CHEBI:57540"/>
        <dbReference type="ChEBI" id="CHEBI:57945"/>
        <dbReference type="ChEBI" id="CHEBI:83276"/>
        <dbReference type="EC" id="1.2.1.94"/>
    </reaction>
</comment>
<comment type="subunit">
    <text evidence="3">Homodimer.</text>
</comment>
<comment type="subcellular location">
    <subcellularLocation>
        <location evidence="3">Microsome membrane</location>
        <topology evidence="3">Single-pass membrane protein</topology>
    </subcellularLocation>
    <subcellularLocation>
        <location evidence="3">Endoplasmic reticulum membrane</location>
        <topology evidence="3">Single-pass membrane protein</topology>
        <orientation evidence="2">Cytoplasmic side</orientation>
    </subcellularLocation>
</comment>
<comment type="similarity">
    <text evidence="7">Belongs to the aldehyde dehydrogenase family.</text>
</comment>
<protein>
    <recommendedName>
        <fullName>Aldehyde dehydrogenase family 3 member A2</fullName>
        <ecNumber evidence="3">1.2.1.3</ecNumber>
        <ecNumber evidence="3">1.2.1.94</ecNumber>
    </recommendedName>
    <alternativeName>
        <fullName>Fatty aldehyde dehydrogenase</fullName>
    </alternativeName>
</protein>
<sequence>MEREVQRVRQAFLSGRSRPLRFRLQQLEALRRMVQEREKDILAAIAADLCKSELNAYSQEVITVLGEIDFMLENLPEWVTAKPVKKNLLTMMDEAYIQPQPLGVVLIIGAWNYPFVLIIQPLIGAIAAGNAVIIKPSELSENTAKIVAKLLPQYLDQDLYVVINGGVEETTELLKQRFDHIFYTGNTAVGKIVMEAAAKHLTPVTLELGGKSPCYIDKDCDLDIVCRRITWGKYMNCGQTCIAPDYILCEASLQSQIVWKIKETVKEFYGENIKESPDYERIINLRHFKRILSLLEGQKIALGGETDEATRYIAPTVLTDVDPKTKVMQEEIFGPVLPIVPVKNVDEATDFINEREKPLALYVFSHNHKLIKRMIDETSSGGVTGNDVIMHFTLNSFPFGGVGSSGMGAYHGKHSFDTFSHQRPCLLKSLKREGANKLRYPPNSQSKVDWGKFFLLRRFNKEKLGLLVLTFLGIVAAVLVNAGYY</sequence>
<reference key="1">
    <citation type="submission" date="2003-10" db="EMBL/GenBank/DDBJ databases">
        <title>Isolation and characterization of cDNA for macaque neurological disease genes.</title>
        <authorList>
            <person name="Kusuda J."/>
            <person name="Osada N."/>
            <person name="Tanuma R."/>
            <person name="Hirata M."/>
            <person name="Sugano S."/>
            <person name="Hashimoto K."/>
        </authorList>
    </citation>
    <scope>NUCLEOTIDE SEQUENCE [LARGE SCALE MRNA]</scope>
    <source>
        <tissue>Brain cortex</tissue>
    </source>
</reference>